<comment type="function">
    <text>Displays several functions associated with host defense: it promotes agglutination, bacterial capsular swelling, phagocytosis and complement fixation through its calcium-dependent binding to phosphorylcholine. Can interact with DNA and histones and may scavenge nuclear material released from damaged circulating cells.</text>
</comment>
<comment type="cofactor">
    <cofactor evidence="1">
        <name>Ca(2+)</name>
        <dbReference type="ChEBI" id="CHEBI:29108"/>
    </cofactor>
    <text evidence="1">Binds 2 calcium ions per subunit.</text>
</comment>
<comment type="subunit">
    <text evidence="1">Homopentamer. Pentraxin (or pentaxin) have a discoid arrangement of 5 non-covalently bound subunits. Interacts with FCN1; may regulate monocyte activation by FCN1 (By similarity).</text>
</comment>
<comment type="subcellular location">
    <subcellularLocation>
        <location>Secreted</location>
    </subcellularLocation>
</comment>
<comment type="tissue specificity">
    <text>Found in plasma.</text>
</comment>
<comment type="induction">
    <text>The concentration of CRP in plasma increases greatly during acute phase response to tissue injury, infection or other inflammatory stimuli.</text>
</comment>
<comment type="similarity">
    <text evidence="3">Belongs to the pentraxin family.</text>
</comment>
<comment type="online information" name="Protein Spotlight">
    <link uri="https://www.proteinspotlight.org/back_issues/030"/>
    <text>No more Christmas pudding? - Issue 30 of January 2003</text>
</comment>
<keyword id="KW-0011">Acute phase</keyword>
<keyword id="KW-0106">Calcium</keyword>
<keyword id="KW-1015">Disulfide bond</keyword>
<keyword id="KW-0479">Metal-binding</keyword>
<keyword id="KW-1185">Reference proteome</keyword>
<keyword id="KW-0964">Secreted</keyword>
<keyword id="KW-0732">Signal</keyword>
<proteinExistence type="evidence at protein level"/>
<protein>
    <recommendedName>
        <fullName>C-reactive protein</fullName>
    </recommendedName>
</protein>
<organism>
    <name type="scientific">Mus musculus</name>
    <name type="common">Mouse</name>
    <dbReference type="NCBI Taxonomy" id="10090"/>
    <lineage>
        <taxon>Eukaryota</taxon>
        <taxon>Metazoa</taxon>
        <taxon>Chordata</taxon>
        <taxon>Craniata</taxon>
        <taxon>Vertebrata</taxon>
        <taxon>Euteleostomi</taxon>
        <taxon>Mammalia</taxon>
        <taxon>Eutheria</taxon>
        <taxon>Euarchontoglires</taxon>
        <taxon>Glires</taxon>
        <taxon>Rodentia</taxon>
        <taxon>Myomorpha</taxon>
        <taxon>Muroidea</taxon>
        <taxon>Muridae</taxon>
        <taxon>Murinae</taxon>
        <taxon>Mus</taxon>
        <taxon>Mus</taxon>
    </lineage>
</organism>
<dbReference type="EMBL" id="X13588">
    <property type="protein sequence ID" value="CAA31928.1"/>
    <property type="molecule type" value="Genomic_DNA"/>
</dbReference>
<dbReference type="EMBL" id="AC131177">
    <property type="status" value="NOT_ANNOTATED_CDS"/>
    <property type="molecule type" value="Genomic_DNA"/>
</dbReference>
<dbReference type="EMBL" id="X17496">
    <property type="protein sequence ID" value="CAA35531.1"/>
    <property type="molecule type" value="mRNA"/>
</dbReference>
<dbReference type="CCDS" id="CCDS35787.1"/>
<dbReference type="PIR" id="A31583">
    <property type="entry name" value="A31583"/>
</dbReference>
<dbReference type="RefSeq" id="NP_031794.3">
    <property type="nucleotide sequence ID" value="NM_007768.4"/>
</dbReference>
<dbReference type="SMR" id="P14847"/>
<dbReference type="BioGRID" id="198899">
    <property type="interactions" value="3"/>
</dbReference>
<dbReference type="FunCoup" id="P14847">
    <property type="interactions" value="25"/>
</dbReference>
<dbReference type="STRING" id="10090.ENSMUSP00000044665"/>
<dbReference type="PhosphoSitePlus" id="P14847"/>
<dbReference type="CPTAC" id="non-CPTAC-3331"/>
<dbReference type="jPOST" id="P14847"/>
<dbReference type="PaxDb" id="10090-ENSMUSP00000044665"/>
<dbReference type="ProteomicsDB" id="284175"/>
<dbReference type="Antibodypedia" id="3561">
    <property type="antibodies" value="2155 antibodies from 52 providers"/>
</dbReference>
<dbReference type="DNASU" id="12944"/>
<dbReference type="Ensembl" id="ENSMUST00000038495.5">
    <property type="protein sequence ID" value="ENSMUSP00000044665.4"/>
    <property type="gene ID" value="ENSMUSG00000037942.6"/>
</dbReference>
<dbReference type="GeneID" id="12944"/>
<dbReference type="KEGG" id="mmu:12944"/>
<dbReference type="UCSC" id="uc011wwq.1">
    <property type="organism name" value="mouse"/>
</dbReference>
<dbReference type="AGR" id="MGI:88512"/>
<dbReference type="CTD" id="1401"/>
<dbReference type="MGI" id="MGI:88512">
    <property type="gene designation" value="Crp"/>
</dbReference>
<dbReference type="VEuPathDB" id="HostDB:ENSMUSG00000037942"/>
<dbReference type="eggNOG" id="ENOG502S201">
    <property type="taxonomic scope" value="Eukaryota"/>
</dbReference>
<dbReference type="GeneTree" id="ENSGT01100000263515"/>
<dbReference type="HOGENOM" id="CLU_032051_2_0_1"/>
<dbReference type="InParanoid" id="P14847"/>
<dbReference type="OMA" id="MEKLLWC"/>
<dbReference type="OrthoDB" id="547680at2759"/>
<dbReference type="PhylomeDB" id="P14847"/>
<dbReference type="TreeFam" id="TF330208"/>
<dbReference type="Reactome" id="R-MMU-173623">
    <property type="pathway name" value="Classical antibody-mediated complement activation"/>
</dbReference>
<dbReference type="BioGRID-ORCS" id="12944">
    <property type="hits" value="4 hits in 78 CRISPR screens"/>
</dbReference>
<dbReference type="ChiTaRS" id="Crp">
    <property type="organism name" value="mouse"/>
</dbReference>
<dbReference type="PRO" id="PR:P14847"/>
<dbReference type="Proteomes" id="UP000000589">
    <property type="component" value="Chromosome 1"/>
</dbReference>
<dbReference type="RNAct" id="P14847">
    <property type="molecule type" value="protein"/>
</dbReference>
<dbReference type="Bgee" id="ENSMUSG00000037942">
    <property type="expression patterns" value="Expressed in left lobe of liver and 33 other cell types or tissues"/>
</dbReference>
<dbReference type="GO" id="GO:0005615">
    <property type="term" value="C:extracellular space"/>
    <property type="evidence" value="ECO:0007669"/>
    <property type="project" value="Ensembl"/>
</dbReference>
<dbReference type="GO" id="GO:0005509">
    <property type="term" value="F:calcium ion binding"/>
    <property type="evidence" value="ECO:0007669"/>
    <property type="project" value="Ensembl"/>
</dbReference>
<dbReference type="GO" id="GO:0001849">
    <property type="term" value="F:complement component C1q complex binding"/>
    <property type="evidence" value="ECO:0007669"/>
    <property type="project" value="Ensembl"/>
</dbReference>
<dbReference type="GO" id="GO:0042802">
    <property type="term" value="F:identical protein binding"/>
    <property type="evidence" value="ECO:0007669"/>
    <property type="project" value="Ensembl"/>
</dbReference>
<dbReference type="GO" id="GO:0030169">
    <property type="term" value="F:low-density lipoprotein particle binding"/>
    <property type="evidence" value="ECO:0007669"/>
    <property type="project" value="Ensembl"/>
</dbReference>
<dbReference type="GO" id="GO:0050750">
    <property type="term" value="F:low-density lipoprotein particle receptor binding"/>
    <property type="evidence" value="ECO:0007669"/>
    <property type="project" value="Ensembl"/>
</dbReference>
<dbReference type="GO" id="GO:0006953">
    <property type="term" value="P:acute-phase response"/>
    <property type="evidence" value="ECO:0007669"/>
    <property type="project" value="UniProtKB-KW"/>
</dbReference>
<dbReference type="GO" id="GO:0010888">
    <property type="term" value="P:negative regulation of lipid storage"/>
    <property type="evidence" value="ECO:0007669"/>
    <property type="project" value="Ensembl"/>
</dbReference>
<dbReference type="GO" id="GO:0010745">
    <property type="term" value="P:negative regulation of macrophage derived foam cell differentiation"/>
    <property type="evidence" value="ECO:0007669"/>
    <property type="project" value="Ensembl"/>
</dbReference>
<dbReference type="GO" id="GO:0032945">
    <property type="term" value="P:negative regulation of mononuclear cell proliferation"/>
    <property type="evidence" value="ECO:0007669"/>
    <property type="project" value="Ensembl"/>
</dbReference>
<dbReference type="GO" id="GO:0010628">
    <property type="term" value="P:positive regulation of gene expression"/>
    <property type="evidence" value="ECO:0007669"/>
    <property type="project" value="Ensembl"/>
</dbReference>
<dbReference type="GO" id="GO:0032930">
    <property type="term" value="P:positive regulation of superoxide anion generation"/>
    <property type="evidence" value="ECO:0007669"/>
    <property type="project" value="Ensembl"/>
</dbReference>
<dbReference type="GO" id="GO:0032677">
    <property type="term" value="P:regulation of interleukin-8 production"/>
    <property type="evidence" value="ECO:0000250"/>
    <property type="project" value="UniProtKB"/>
</dbReference>
<dbReference type="GO" id="GO:0042310">
    <property type="term" value="P:vasoconstriction"/>
    <property type="evidence" value="ECO:0007669"/>
    <property type="project" value="Ensembl"/>
</dbReference>
<dbReference type="CDD" id="cd00152">
    <property type="entry name" value="PTX"/>
    <property type="match status" value="1"/>
</dbReference>
<dbReference type="FunFam" id="2.60.120.200:FF:000070">
    <property type="entry name" value="Serum amyloid P-component"/>
    <property type="match status" value="1"/>
</dbReference>
<dbReference type="Gene3D" id="2.60.120.200">
    <property type="match status" value="1"/>
</dbReference>
<dbReference type="InterPro" id="IPR013320">
    <property type="entry name" value="ConA-like_dom_sf"/>
</dbReference>
<dbReference type="InterPro" id="IPR030476">
    <property type="entry name" value="Pentaxin_CS"/>
</dbReference>
<dbReference type="InterPro" id="IPR001759">
    <property type="entry name" value="Pentraxin-related"/>
</dbReference>
<dbReference type="InterPro" id="IPR051005">
    <property type="entry name" value="Pentraxin_domain"/>
</dbReference>
<dbReference type="PANTHER" id="PTHR45869:SF7">
    <property type="entry name" value="C-REACTIVE PROTEIN"/>
    <property type="match status" value="1"/>
</dbReference>
<dbReference type="PANTHER" id="PTHR45869">
    <property type="entry name" value="C-REACTIVE PROTEIN-RELATED"/>
    <property type="match status" value="1"/>
</dbReference>
<dbReference type="Pfam" id="PF00354">
    <property type="entry name" value="Pentaxin"/>
    <property type="match status" value="1"/>
</dbReference>
<dbReference type="PRINTS" id="PR00895">
    <property type="entry name" value="PENTAXIN"/>
</dbReference>
<dbReference type="SMART" id="SM00159">
    <property type="entry name" value="PTX"/>
    <property type="match status" value="1"/>
</dbReference>
<dbReference type="SUPFAM" id="SSF49899">
    <property type="entry name" value="Concanavalin A-like lectins/glucanases"/>
    <property type="match status" value="1"/>
</dbReference>
<dbReference type="PROSITE" id="PS00289">
    <property type="entry name" value="PTX_1"/>
    <property type="match status" value="1"/>
</dbReference>
<dbReference type="PROSITE" id="PS51828">
    <property type="entry name" value="PTX_2"/>
    <property type="match status" value="1"/>
</dbReference>
<name>CRP_MOUSE</name>
<gene>
    <name type="primary">Crp</name>
    <name type="synonym">Ptx1</name>
</gene>
<accession>P14847</accession>
<accession>E9PZ20</accession>
<feature type="signal peptide">
    <location>
        <begin position="1"/>
        <end position="19"/>
    </location>
</feature>
<feature type="chain" id="PRO_0000023529" description="C-reactive protein">
    <location>
        <begin position="20"/>
        <end position="225"/>
    </location>
</feature>
<feature type="domain" description="Pentraxin (PTX)" evidence="2">
    <location>
        <begin position="24"/>
        <end position="225"/>
    </location>
</feature>
<feature type="binding site" evidence="1">
    <location>
        <position position="80"/>
    </location>
    <ligand>
        <name>Ca(2+)</name>
        <dbReference type="ChEBI" id="CHEBI:29108"/>
        <label>1</label>
    </ligand>
</feature>
<feature type="binding site" evidence="1">
    <location>
        <position position="157"/>
    </location>
    <ligand>
        <name>Ca(2+)</name>
        <dbReference type="ChEBI" id="CHEBI:29108"/>
        <label>1</label>
    </ligand>
</feature>
<feature type="binding site" evidence="2">
    <location>
        <position position="157"/>
    </location>
    <ligand>
        <name>Ca(2+)</name>
        <dbReference type="ChEBI" id="CHEBI:29108"/>
        <label>2</label>
    </ligand>
</feature>
<feature type="binding site" evidence="1">
    <location>
        <position position="158"/>
    </location>
    <ligand>
        <name>Ca(2+)</name>
        <dbReference type="ChEBI" id="CHEBI:29108"/>
        <label>1</label>
    </ligand>
</feature>
<feature type="binding site" evidence="1">
    <location>
        <position position="159"/>
    </location>
    <ligand>
        <name>Ca(2+)</name>
        <dbReference type="ChEBI" id="CHEBI:29108"/>
        <label>1</label>
    </ligand>
</feature>
<feature type="binding site" evidence="2">
    <location>
        <position position="159"/>
    </location>
    <ligand>
        <name>Ca(2+)</name>
        <dbReference type="ChEBI" id="CHEBI:29108"/>
        <label>2</label>
    </ligand>
</feature>
<feature type="binding site" evidence="2">
    <location>
        <position position="169"/>
    </location>
    <ligand>
        <name>Ca(2+)</name>
        <dbReference type="ChEBI" id="CHEBI:29108"/>
        <label>2</label>
    </ligand>
</feature>
<feature type="disulfide bond" evidence="2">
    <location>
        <begin position="55"/>
        <end position="116"/>
    </location>
</feature>
<feature type="sequence conflict" description="In Ref. 1; CAA31928." evidence="3" ref="1">
    <original>P</original>
    <variation>A</variation>
    <location>
        <position position="134"/>
    </location>
</feature>
<feature type="sequence conflict" description="In Ref. 1; CAA31928 and 3; CAA35531." evidence="3" ref="1 3">
    <original>S</original>
    <variation>N</variation>
    <location>
        <position position="191"/>
    </location>
</feature>
<reference key="1">
    <citation type="journal article" date="1988" name="Biochem. Biophys. Res. Commun.">
        <title>Structure of the mouse C-reactive protein gene.</title>
        <authorList>
            <person name="Ohnishi S."/>
            <person name="Maeda S."/>
            <person name="Nishiguchi S."/>
            <person name="Arao T."/>
            <person name="Shimada K."/>
        </authorList>
    </citation>
    <scope>NUCLEOTIDE SEQUENCE [GENOMIC DNA]</scope>
</reference>
<reference key="2">
    <citation type="journal article" date="2009" name="PLoS Biol.">
        <title>Lineage-specific biology revealed by a finished genome assembly of the mouse.</title>
        <authorList>
            <person name="Church D.M."/>
            <person name="Goodstadt L."/>
            <person name="Hillier L.W."/>
            <person name="Zody M.C."/>
            <person name="Goldstein S."/>
            <person name="She X."/>
            <person name="Bult C.J."/>
            <person name="Agarwala R."/>
            <person name="Cherry J.L."/>
            <person name="DiCuccio M."/>
            <person name="Hlavina W."/>
            <person name="Kapustin Y."/>
            <person name="Meric P."/>
            <person name="Maglott D."/>
            <person name="Birtle Z."/>
            <person name="Marques A.C."/>
            <person name="Graves T."/>
            <person name="Zhou S."/>
            <person name="Teague B."/>
            <person name="Potamousis K."/>
            <person name="Churas C."/>
            <person name="Place M."/>
            <person name="Herschleb J."/>
            <person name="Runnheim R."/>
            <person name="Forrest D."/>
            <person name="Amos-Landgraf J."/>
            <person name="Schwartz D.C."/>
            <person name="Cheng Z."/>
            <person name="Lindblad-Toh K."/>
            <person name="Eichler E.E."/>
            <person name="Ponting C.P."/>
        </authorList>
    </citation>
    <scope>NUCLEOTIDE SEQUENCE [LARGE SCALE GENOMIC DNA]</scope>
    <source>
        <strain>C57BL/6J</strain>
    </source>
</reference>
<reference key="3">
    <citation type="journal article" date="1990" name="Biochem. J.">
        <title>Mouse C-reactive protein. Generation of cDNA clones, structural analysis, and induction of mRNA during inflammation.</title>
        <authorList>
            <person name="Whitehead A.S."/>
            <person name="Zahedi K."/>
            <person name="Rits M."/>
            <person name="Mortensen R.F."/>
            <person name="Lelias J.M."/>
        </authorList>
    </citation>
    <scope>NUCLEOTIDE SEQUENCE [MRNA]</scope>
    <source>
        <strain>CBA/J</strain>
        <tissue>Liver</tissue>
    </source>
</reference>
<reference key="4">
    <citation type="journal article" date="2010" name="Cell">
        <title>A tissue-specific atlas of mouse protein phosphorylation and expression.</title>
        <authorList>
            <person name="Huttlin E.L."/>
            <person name="Jedrychowski M.P."/>
            <person name="Elias J.E."/>
            <person name="Goswami T."/>
            <person name="Rad R."/>
            <person name="Beausoleil S.A."/>
            <person name="Villen J."/>
            <person name="Haas W."/>
            <person name="Sowa M.E."/>
            <person name="Gygi S.P."/>
        </authorList>
    </citation>
    <scope>IDENTIFICATION BY MASS SPECTROMETRY [LARGE SCALE ANALYSIS]</scope>
    <source>
        <tissue>Heart</tissue>
        <tissue>Liver</tissue>
        <tissue>Lung</tissue>
        <tissue>Testis</tissue>
    </source>
</reference>
<evidence type="ECO:0000250" key="1"/>
<evidence type="ECO:0000255" key="2">
    <source>
        <dbReference type="PROSITE-ProRule" id="PRU01172"/>
    </source>
</evidence>
<evidence type="ECO:0000305" key="3"/>
<sequence>MEKLLWCLLIMISFSRTFGHEDMFKKAFVFPKESDTSYVSLEAESKKPLNTFTVCLHFYTALSTVRSFSVFSYATKKNSNDILIFWNKDKQYTFGVGGAEVRFMVSEIPEAPTHICASWESATGIVEFWIDGKPKVRKSLHKGYTVGPDASIILGQEQDSYGGDFDAKQSLVGDIGDVNMWDFVLSPEQISTVYVGGTLSPNVLNWRALNYKAQGDVFIKPQLWS</sequence>